<accession>P37485</accession>
<sequence>MKQTRALMEGAILISLFAIITLLVVYVPVIGTILLFALPLPMILYTIRHGLKLGIWMGAVSLPVVFIVGSFNGLIVAFMSACAGIAMGHFFKRKEPGHAIISGALIYMLSIVFYFVISIQFLGINIIDEAMTQYRQSLDIVETVAKQSGNAGQFEKQLKLMEEQLGIVQYLFPTAIVMVGVIFSFLSYLIAKPLLRRFSPDIPNLKPFRELKFPQSVVVLYLIIVMLSFLPLEKGQMLYSIALNGEFILGFLIFIQGLSFIFFYCHKKQYPKAAAVIAVILGFVHPVFMAAIRILGVLDMGFHIRNKVK</sequence>
<dbReference type="EMBL" id="D26185">
    <property type="protein sequence ID" value="BAA05183.1"/>
    <property type="molecule type" value="Genomic_DNA"/>
</dbReference>
<dbReference type="EMBL" id="AL009126">
    <property type="protein sequence ID" value="CAB16089.1"/>
    <property type="molecule type" value="Genomic_DNA"/>
</dbReference>
<dbReference type="PIR" id="S65977">
    <property type="entry name" value="S65977"/>
</dbReference>
<dbReference type="RefSeq" id="NP_391932.1">
    <property type="nucleotide sequence ID" value="NC_000964.3"/>
</dbReference>
<dbReference type="RefSeq" id="WP_003243969.1">
    <property type="nucleotide sequence ID" value="NZ_OZ025638.1"/>
</dbReference>
<dbReference type="FunCoup" id="P37485">
    <property type="interactions" value="8"/>
</dbReference>
<dbReference type="STRING" id="224308.BSU40520"/>
<dbReference type="PaxDb" id="224308-BSU40520"/>
<dbReference type="EnsemblBacteria" id="CAB16089">
    <property type="protein sequence ID" value="CAB16089"/>
    <property type="gene ID" value="BSU_40520"/>
</dbReference>
<dbReference type="GeneID" id="937844"/>
<dbReference type="KEGG" id="bsu:BSU40520"/>
<dbReference type="PATRIC" id="fig|224308.179.peg.4386"/>
<dbReference type="eggNOG" id="COG4241">
    <property type="taxonomic scope" value="Bacteria"/>
</dbReference>
<dbReference type="InParanoid" id="P37485"/>
<dbReference type="OrthoDB" id="2987886at2"/>
<dbReference type="PhylomeDB" id="P37485"/>
<dbReference type="BioCyc" id="BSUB:BSU40520-MONOMER"/>
<dbReference type="Proteomes" id="UP000001570">
    <property type="component" value="Chromosome"/>
</dbReference>
<dbReference type="InterPro" id="IPR018710">
    <property type="entry name" value="DUF2232"/>
</dbReference>
<dbReference type="PANTHER" id="PTHR41324:SF1">
    <property type="entry name" value="DUF2232 DOMAIN-CONTAINING PROTEIN"/>
    <property type="match status" value="1"/>
</dbReference>
<dbReference type="PANTHER" id="PTHR41324">
    <property type="entry name" value="MEMBRANE PROTEIN-RELATED"/>
    <property type="match status" value="1"/>
</dbReference>
<dbReference type="Pfam" id="PF09991">
    <property type="entry name" value="DUF2232"/>
    <property type="match status" value="1"/>
</dbReference>
<gene>
    <name type="primary">yybS</name>
    <name type="ordered locus">BSU40520</name>
</gene>
<feature type="chain" id="PRO_0000050070" description="Uncharacterized protein YybS">
    <location>
        <begin position="1"/>
        <end position="309"/>
    </location>
</feature>
<reference key="1">
    <citation type="journal article" date="1994" name="DNA Res.">
        <title>Systematic sequencing of the 180 kilobase region of the Bacillus subtilis chromosome containing the replication origin.</title>
        <authorList>
            <person name="Ogasawara N."/>
            <person name="Nakai S."/>
            <person name="Yoshikawa H."/>
        </authorList>
    </citation>
    <scope>NUCLEOTIDE SEQUENCE [GENOMIC DNA]</scope>
    <source>
        <strain>168</strain>
    </source>
</reference>
<reference key="2">
    <citation type="journal article" date="1997" name="Nature">
        <title>The complete genome sequence of the Gram-positive bacterium Bacillus subtilis.</title>
        <authorList>
            <person name="Kunst F."/>
            <person name="Ogasawara N."/>
            <person name="Moszer I."/>
            <person name="Albertini A.M."/>
            <person name="Alloni G."/>
            <person name="Azevedo V."/>
            <person name="Bertero M.G."/>
            <person name="Bessieres P."/>
            <person name="Bolotin A."/>
            <person name="Borchert S."/>
            <person name="Borriss R."/>
            <person name="Boursier L."/>
            <person name="Brans A."/>
            <person name="Braun M."/>
            <person name="Brignell S.C."/>
            <person name="Bron S."/>
            <person name="Brouillet S."/>
            <person name="Bruschi C.V."/>
            <person name="Caldwell B."/>
            <person name="Capuano V."/>
            <person name="Carter N.M."/>
            <person name="Choi S.-K."/>
            <person name="Codani J.-J."/>
            <person name="Connerton I.F."/>
            <person name="Cummings N.J."/>
            <person name="Daniel R.A."/>
            <person name="Denizot F."/>
            <person name="Devine K.M."/>
            <person name="Duesterhoeft A."/>
            <person name="Ehrlich S.D."/>
            <person name="Emmerson P.T."/>
            <person name="Entian K.-D."/>
            <person name="Errington J."/>
            <person name="Fabret C."/>
            <person name="Ferrari E."/>
            <person name="Foulger D."/>
            <person name="Fritz C."/>
            <person name="Fujita M."/>
            <person name="Fujita Y."/>
            <person name="Fuma S."/>
            <person name="Galizzi A."/>
            <person name="Galleron N."/>
            <person name="Ghim S.-Y."/>
            <person name="Glaser P."/>
            <person name="Goffeau A."/>
            <person name="Golightly E.J."/>
            <person name="Grandi G."/>
            <person name="Guiseppi G."/>
            <person name="Guy B.J."/>
            <person name="Haga K."/>
            <person name="Haiech J."/>
            <person name="Harwood C.R."/>
            <person name="Henaut A."/>
            <person name="Hilbert H."/>
            <person name="Holsappel S."/>
            <person name="Hosono S."/>
            <person name="Hullo M.-F."/>
            <person name="Itaya M."/>
            <person name="Jones L.-M."/>
            <person name="Joris B."/>
            <person name="Karamata D."/>
            <person name="Kasahara Y."/>
            <person name="Klaerr-Blanchard M."/>
            <person name="Klein C."/>
            <person name="Kobayashi Y."/>
            <person name="Koetter P."/>
            <person name="Koningstein G."/>
            <person name="Krogh S."/>
            <person name="Kumano M."/>
            <person name="Kurita K."/>
            <person name="Lapidus A."/>
            <person name="Lardinois S."/>
            <person name="Lauber J."/>
            <person name="Lazarevic V."/>
            <person name="Lee S.-M."/>
            <person name="Levine A."/>
            <person name="Liu H."/>
            <person name="Masuda S."/>
            <person name="Mauel C."/>
            <person name="Medigue C."/>
            <person name="Medina N."/>
            <person name="Mellado R.P."/>
            <person name="Mizuno M."/>
            <person name="Moestl D."/>
            <person name="Nakai S."/>
            <person name="Noback M."/>
            <person name="Noone D."/>
            <person name="O'Reilly M."/>
            <person name="Ogawa K."/>
            <person name="Ogiwara A."/>
            <person name="Oudega B."/>
            <person name="Park S.-H."/>
            <person name="Parro V."/>
            <person name="Pohl T.M."/>
            <person name="Portetelle D."/>
            <person name="Porwollik S."/>
            <person name="Prescott A.M."/>
            <person name="Presecan E."/>
            <person name="Pujic P."/>
            <person name="Purnelle B."/>
            <person name="Rapoport G."/>
            <person name="Rey M."/>
            <person name="Reynolds S."/>
            <person name="Rieger M."/>
            <person name="Rivolta C."/>
            <person name="Rocha E."/>
            <person name="Roche B."/>
            <person name="Rose M."/>
            <person name="Sadaie Y."/>
            <person name="Sato T."/>
            <person name="Scanlan E."/>
            <person name="Schleich S."/>
            <person name="Schroeter R."/>
            <person name="Scoffone F."/>
            <person name="Sekiguchi J."/>
            <person name="Sekowska A."/>
            <person name="Seror S.J."/>
            <person name="Serror P."/>
            <person name="Shin B.-S."/>
            <person name="Soldo B."/>
            <person name="Sorokin A."/>
            <person name="Tacconi E."/>
            <person name="Takagi T."/>
            <person name="Takahashi H."/>
            <person name="Takemaru K."/>
            <person name="Takeuchi M."/>
            <person name="Tamakoshi A."/>
            <person name="Tanaka T."/>
            <person name="Terpstra P."/>
            <person name="Tognoni A."/>
            <person name="Tosato V."/>
            <person name="Uchiyama S."/>
            <person name="Vandenbol M."/>
            <person name="Vannier F."/>
            <person name="Vassarotti A."/>
            <person name="Viari A."/>
            <person name="Wambutt R."/>
            <person name="Wedler E."/>
            <person name="Wedler H."/>
            <person name="Weitzenegger T."/>
            <person name="Winters P."/>
            <person name="Wipat A."/>
            <person name="Yamamoto H."/>
            <person name="Yamane K."/>
            <person name="Yasumoto K."/>
            <person name="Yata K."/>
            <person name="Yoshida K."/>
            <person name="Yoshikawa H.-F."/>
            <person name="Zumstein E."/>
            <person name="Yoshikawa H."/>
            <person name="Danchin A."/>
        </authorList>
    </citation>
    <scope>NUCLEOTIDE SEQUENCE [LARGE SCALE GENOMIC DNA]</scope>
    <source>
        <strain>168</strain>
    </source>
</reference>
<organism>
    <name type="scientific">Bacillus subtilis (strain 168)</name>
    <dbReference type="NCBI Taxonomy" id="224308"/>
    <lineage>
        <taxon>Bacteria</taxon>
        <taxon>Bacillati</taxon>
        <taxon>Bacillota</taxon>
        <taxon>Bacilli</taxon>
        <taxon>Bacillales</taxon>
        <taxon>Bacillaceae</taxon>
        <taxon>Bacillus</taxon>
    </lineage>
</organism>
<keyword id="KW-1185">Reference proteome</keyword>
<proteinExistence type="predicted"/>
<name>YYBS_BACSU</name>
<protein>
    <recommendedName>
        <fullName>Uncharacterized protein YybS</fullName>
    </recommendedName>
</protein>